<evidence type="ECO:0000255" key="1"/>
<evidence type="ECO:0000269" key="2">
    <source>
    </source>
</evidence>
<evidence type="ECO:0000269" key="3">
    <source>
    </source>
</evidence>
<evidence type="ECO:0000269" key="4">
    <source>
    </source>
</evidence>
<evidence type="ECO:0000303" key="5">
    <source>
    </source>
</evidence>
<evidence type="ECO:0000312" key="6">
    <source>
        <dbReference type="Araport" id="AT1G52970"/>
    </source>
</evidence>
<evidence type="ECO:0000312" key="7">
    <source>
        <dbReference type="EMBL" id="AAG52284.1"/>
    </source>
</evidence>
<dbReference type="EMBL" id="AC019018">
    <property type="protein sequence ID" value="AAG52284.1"/>
    <property type="molecule type" value="Genomic_DNA"/>
</dbReference>
<dbReference type="EMBL" id="CP002684">
    <property type="protein sequence ID" value="AEE32872.1"/>
    <property type="molecule type" value="Genomic_DNA"/>
</dbReference>
<dbReference type="EMBL" id="BT029321">
    <property type="protein sequence ID" value="ABK32135.1"/>
    <property type="molecule type" value="mRNA"/>
</dbReference>
<dbReference type="RefSeq" id="NP_175705.1">
    <property type="nucleotide sequence ID" value="NM_104175.2"/>
</dbReference>
<dbReference type="FunCoup" id="Q9C924">
    <property type="interactions" value="36"/>
</dbReference>
<dbReference type="STRING" id="3702.Q9C924"/>
<dbReference type="PaxDb" id="3702-AT1G52970.1"/>
<dbReference type="ProteomicsDB" id="222746"/>
<dbReference type="EnsemblPlants" id="AT1G52970.1">
    <property type="protein sequence ID" value="AT1G52970.1"/>
    <property type="gene ID" value="AT1G52970"/>
</dbReference>
<dbReference type="GeneID" id="841730"/>
<dbReference type="Gramene" id="AT1G52970.1">
    <property type="protein sequence ID" value="AT1G52970.1"/>
    <property type="gene ID" value="AT1G52970"/>
</dbReference>
<dbReference type="KEGG" id="ath:AT1G52970"/>
<dbReference type="Araport" id="AT1G52970"/>
<dbReference type="TAIR" id="AT1G52970">
    <property type="gene designation" value="DD11"/>
</dbReference>
<dbReference type="eggNOG" id="ENOG502R1HH">
    <property type="taxonomic scope" value="Eukaryota"/>
</dbReference>
<dbReference type="HOGENOM" id="CLU_103514_0_0_1"/>
<dbReference type="InParanoid" id="Q9C924"/>
<dbReference type="OMA" id="NKCVETT"/>
<dbReference type="PhylomeDB" id="Q9C924"/>
<dbReference type="PRO" id="PR:Q9C924"/>
<dbReference type="Proteomes" id="UP000006548">
    <property type="component" value="Chromosome 1"/>
</dbReference>
<dbReference type="ExpressionAtlas" id="Q9C924">
    <property type="expression patterns" value="baseline and differential"/>
</dbReference>
<dbReference type="GO" id="GO:0043680">
    <property type="term" value="C:filiform apparatus"/>
    <property type="evidence" value="ECO:0000314"/>
    <property type="project" value="UniProtKB"/>
</dbReference>
<dbReference type="InterPro" id="IPR040220">
    <property type="entry name" value="DD11"/>
</dbReference>
<dbReference type="InterPro" id="IPR008502">
    <property type="entry name" value="Prolamin-like"/>
</dbReference>
<dbReference type="PANTHER" id="PTHR31207:SF23">
    <property type="entry name" value="DOWNREGULATED IN DIF1 18-RELATED"/>
    <property type="match status" value="1"/>
</dbReference>
<dbReference type="PANTHER" id="PTHR31207">
    <property type="entry name" value="ECA1 GAMETOGENESIS FAMILY PROTEIN (DUF784)-RELATED-RELATED"/>
    <property type="match status" value="1"/>
</dbReference>
<dbReference type="Pfam" id="PF05617">
    <property type="entry name" value="Prolamin_like"/>
    <property type="match status" value="1"/>
</dbReference>
<reference key="1">
    <citation type="journal article" date="2000" name="Nature">
        <title>Sequence and analysis of chromosome 1 of the plant Arabidopsis thaliana.</title>
        <authorList>
            <person name="Theologis A."/>
            <person name="Ecker J.R."/>
            <person name="Palm C.J."/>
            <person name="Federspiel N.A."/>
            <person name="Kaul S."/>
            <person name="White O."/>
            <person name="Alonso J."/>
            <person name="Altafi H."/>
            <person name="Araujo R."/>
            <person name="Bowman C.L."/>
            <person name="Brooks S.Y."/>
            <person name="Buehler E."/>
            <person name="Chan A."/>
            <person name="Chao Q."/>
            <person name="Chen H."/>
            <person name="Cheuk R.F."/>
            <person name="Chin C.W."/>
            <person name="Chung M.K."/>
            <person name="Conn L."/>
            <person name="Conway A.B."/>
            <person name="Conway A.R."/>
            <person name="Creasy T.H."/>
            <person name="Dewar K."/>
            <person name="Dunn P."/>
            <person name="Etgu P."/>
            <person name="Feldblyum T.V."/>
            <person name="Feng J.-D."/>
            <person name="Fong B."/>
            <person name="Fujii C.Y."/>
            <person name="Gill J.E."/>
            <person name="Goldsmith A.D."/>
            <person name="Haas B."/>
            <person name="Hansen N.F."/>
            <person name="Hughes B."/>
            <person name="Huizar L."/>
            <person name="Hunter J.L."/>
            <person name="Jenkins J."/>
            <person name="Johnson-Hopson C."/>
            <person name="Khan S."/>
            <person name="Khaykin E."/>
            <person name="Kim C.J."/>
            <person name="Koo H.L."/>
            <person name="Kremenetskaia I."/>
            <person name="Kurtz D.B."/>
            <person name="Kwan A."/>
            <person name="Lam B."/>
            <person name="Langin-Hooper S."/>
            <person name="Lee A."/>
            <person name="Lee J.M."/>
            <person name="Lenz C.A."/>
            <person name="Li J.H."/>
            <person name="Li Y.-P."/>
            <person name="Lin X."/>
            <person name="Liu S.X."/>
            <person name="Liu Z.A."/>
            <person name="Luros J.S."/>
            <person name="Maiti R."/>
            <person name="Marziali A."/>
            <person name="Militscher J."/>
            <person name="Miranda M."/>
            <person name="Nguyen M."/>
            <person name="Nierman W.C."/>
            <person name="Osborne B.I."/>
            <person name="Pai G."/>
            <person name="Peterson J."/>
            <person name="Pham P.K."/>
            <person name="Rizzo M."/>
            <person name="Rooney T."/>
            <person name="Rowley D."/>
            <person name="Sakano H."/>
            <person name="Salzberg S.L."/>
            <person name="Schwartz J.R."/>
            <person name="Shinn P."/>
            <person name="Southwick A.M."/>
            <person name="Sun H."/>
            <person name="Tallon L.J."/>
            <person name="Tambunga G."/>
            <person name="Toriumi M.J."/>
            <person name="Town C.D."/>
            <person name="Utterback T."/>
            <person name="Van Aken S."/>
            <person name="Vaysberg M."/>
            <person name="Vysotskaia V.S."/>
            <person name="Walker M."/>
            <person name="Wu D."/>
            <person name="Yu G."/>
            <person name="Fraser C.M."/>
            <person name="Venter J.C."/>
            <person name="Davis R.W."/>
        </authorList>
    </citation>
    <scope>NUCLEOTIDE SEQUENCE [LARGE SCALE GENOMIC DNA]</scope>
    <source>
        <strain>cv. Columbia</strain>
    </source>
</reference>
<reference key="2">
    <citation type="journal article" date="2017" name="Plant J.">
        <title>Araport11: a complete reannotation of the Arabidopsis thaliana reference genome.</title>
        <authorList>
            <person name="Cheng C.Y."/>
            <person name="Krishnakumar V."/>
            <person name="Chan A.P."/>
            <person name="Thibaud-Nissen F."/>
            <person name="Schobel S."/>
            <person name="Town C.D."/>
        </authorList>
    </citation>
    <scope>GENOME REANNOTATION</scope>
    <source>
        <strain>cv. Columbia</strain>
    </source>
</reference>
<reference key="3">
    <citation type="submission" date="2006-11" db="EMBL/GenBank/DDBJ databases">
        <title>Arabidopsis ORF Clones.</title>
        <authorList>
            <person name="Bautista V.R."/>
            <person name="Kim C.J."/>
            <person name="Chen H."/>
            <person name="Quinitio C."/>
            <person name="Ecker J.R."/>
        </authorList>
    </citation>
    <scope>NUCLEOTIDE SEQUENCE [MRNA]</scope>
    <source>
        <strain>cv. Columbia</strain>
    </source>
</reference>
<reference key="4">
    <citation type="journal article" date="2007" name="Genome Biol.">
        <title>Genetic subtraction profiling identifies genes essential for Arabidopsis reproduction and reveals interaction between the female gametophyte and the maternal sporophyte.</title>
        <authorList>
            <person name="Johnston A.J."/>
            <person name="Meier P."/>
            <person name="Gheyselinck J."/>
            <person name="Wuest S.E.J."/>
            <person name="Federer M."/>
            <person name="Schlagenhauf E."/>
            <person name="Becker J.D."/>
            <person name="Grossniklaus U."/>
        </authorList>
    </citation>
    <scope>TISSUE SPECIFICITY</scope>
    <source>
        <strain>cv. Landsberg erecta</strain>
    </source>
</reference>
<reference key="5">
    <citation type="journal article" date="2007" name="Plant Cell">
        <title>MYB98 positively regulates a battery of synergid-expressed genes encoding filiform apparatus localized proteins.</title>
        <authorList>
            <person name="Punwani J.A."/>
            <person name="Rabiger D.S."/>
            <person name="Drews G.N."/>
        </authorList>
    </citation>
    <scope>TISSUE SPECIFICITY</scope>
    <source>
        <strain>cv. Columbia</strain>
    </source>
</reference>
<reference key="6">
    <citation type="journal article" date="2007" name="PLoS Genet.">
        <title>Genome-wide expression profiling of the Arabidopsis female gametophyte identifies families of small, secreted proteins.</title>
        <authorList>
            <person name="Jones-Rhoades M.W."/>
            <person name="Borevitz J.O."/>
            <person name="Preuss D."/>
        </authorList>
    </citation>
    <scope>IDENTIFICATION</scope>
    <source>
        <strain>cv. Columbia</strain>
        <strain>cv. Landsberg erecta</strain>
    </source>
</reference>
<reference key="7">
    <citation type="journal article" date="2008" name="Plant J.">
        <title>The MYB98 subcircuit of the synergid gene regulatory network includes genes directly and indirectly regulated by MYB98.</title>
        <authorList>
            <person name="Punwani J.A."/>
            <person name="Rabiger D.S."/>
            <person name="Lloyd A."/>
            <person name="Drews G.N."/>
        </authorList>
    </citation>
    <scope>TISSUE SPECIFICITY</scope>
    <source>
        <strain>cv. Columbia</strain>
    </source>
</reference>
<keyword id="KW-1185">Reference proteome</keyword>
<keyword id="KW-0732">Signal</keyword>
<accession>Q9C924</accession>
<sequence>MEKAILITFLIATTSMVYQTIGQEEEISPISPESLAYEPAAAYEYDHELLSHMTTRRIKFLQDCSDKMSSKCNVEMTEGLIDDKPVSEDCCVNFLKIGRECHEGLMTFVFATYELKDVASAILPRSKRMWNKCVETTAAKIGAPLAFET</sequence>
<name>DD11_ARATH</name>
<protein>
    <recommendedName>
        <fullName evidence="5">Protein DOWN-REGULATED IN DIF1 11</fullName>
    </recommendedName>
</protein>
<feature type="signal peptide" evidence="1">
    <location>
        <begin position="1"/>
        <end position="22"/>
    </location>
</feature>
<feature type="chain" id="PRO_5009973666" description="Protein DOWN-REGULATED IN DIF1 11">
    <location>
        <begin position="23"/>
        <end position="149"/>
    </location>
</feature>
<comment type="tissue specificity">
    <text evidence="2 3 4">Mostly expressed in embryo sac cells (PubMed:17915010). Restricted to synergid cells, especially in the filiform apparatus of mature female gametophyte, via MYB98-mediated transcription regulation (PubMed:17693534, PubMed:18410484). Also detected at low levels in egg and central cells (PubMed:17693534).</text>
</comment>
<proteinExistence type="evidence at transcript level"/>
<organism>
    <name type="scientific">Arabidopsis thaliana</name>
    <name type="common">Mouse-ear cress</name>
    <dbReference type="NCBI Taxonomy" id="3702"/>
    <lineage>
        <taxon>Eukaryota</taxon>
        <taxon>Viridiplantae</taxon>
        <taxon>Streptophyta</taxon>
        <taxon>Embryophyta</taxon>
        <taxon>Tracheophyta</taxon>
        <taxon>Spermatophyta</taxon>
        <taxon>Magnoliopsida</taxon>
        <taxon>eudicotyledons</taxon>
        <taxon>Gunneridae</taxon>
        <taxon>Pentapetalae</taxon>
        <taxon>rosids</taxon>
        <taxon>malvids</taxon>
        <taxon>Brassicales</taxon>
        <taxon>Brassicaceae</taxon>
        <taxon>Camelineae</taxon>
        <taxon>Arabidopsis</taxon>
    </lineage>
</organism>
<gene>
    <name evidence="5" type="primary">DD11</name>
    <name evidence="6" type="ordered locus">At1g52970</name>
    <name evidence="7" type="ORF">F14G24.24</name>
</gene>